<reference key="1">
    <citation type="journal article" date="2004" name="Genome Res.">
        <title>The status, quality, and expansion of the NIH full-length cDNA project: the Mammalian Gene Collection (MGC).</title>
        <authorList>
            <consortium name="The MGC Project Team"/>
        </authorList>
    </citation>
    <scope>NUCLEOTIDE SEQUENCE [LARGE SCALE MRNA]</scope>
    <source>
        <tissue>Testis</tissue>
    </source>
</reference>
<reference key="2">
    <citation type="journal article" date="2012" name="Nat. Commun.">
        <title>Quantitative maps of protein phosphorylation sites across 14 different rat organs and tissues.</title>
        <authorList>
            <person name="Lundby A."/>
            <person name="Secher A."/>
            <person name="Lage K."/>
            <person name="Nordsborg N.B."/>
            <person name="Dmytriyev A."/>
            <person name="Lundby C."/>
            <person name="Olsen J.V."/>
        </authorList>
    </citation>
    <scope>PHOSPHORYLATION [LARGE SCALE ANALYSIS] AT SER-224; SER-256; SER-265; SER-266; SER-302 AND SER-311</scope>
    <scope>IDENTIFICATION BY MASS SPECTROMETRY [LARGE SCALE ANALYSIS]</scope>
</reference>
<keyword id="KW-0597">Phosphoprotein</keyword>
<keyword id="KW-1185">Reference proteome</keyword>
<comment type="similarity">
    <text evidence="2">Belongs to the PROCA1 family.</text>
</comment>
<sequence length="311" mass="35333">MWVRTTVTIRRWSEEKSGCNHERYPRTDITRLPSWKRGYPASVESSSDMSSFSEGENKETERCCWKHQQCPVHIIHSFSDCGHHNRCMHAVSHCNCESRCQSYRPISVAIFHHPTHHMYMTDDLNDLEANQLAITNNLCSTDRPTDPNSVESTTGAPDLSAPITIWRSASPIDKCQEGKVIKNIKKKKKEKDKEEMMVDEKPKLKKKAKGKLIKKKSPMKSESSPADLSHSISPRELVRTSESSPDSREGLESEDSYERGKERPSSEDIVESSPKKKEKCSAQAKKNATKNLQTRKTSKRKSPPVPNPNLS</sequence>
<feature type="chain" id="PRO_0000336065" description="Protein PROCA1">
    <location>
        <begin position="1"/>
        <end position="311"/>
    </location>
</feature>
<feature type="region of interest" description="Disordered" evidence="1">
    <location>
        <begin position="139"/>
        <end position="159"/>
    </location>
</feature>
<feature type="region of interest" description="Disordered" evidence="1">
    <location>
        <begin position="184"/>
        <end position="311"/>
    </location>
</feature>
<feature type="compositionally biased region" description="Polar residues" evidence="1">
    <location>
        <begin position="139"/>
        <end position="155"/>
    </location>
</feature>
<feature type="compositionally biased region" description="Basic and acidic residues" evidence="1">
    <location>
        <begin position="191"/>
        <end position="202"/>
    </location>
</feature>
<feature type="compositionally biased region" description="Basic residues" evidence="1">
    <location>
        <begin position="203"/>
        <end position="218"/>
    </location>
</feature>
<feature type="compositionally biased region" description="Basic and acidic residues" evidence="1">
    <location>
        <begin position="245"/>
        <end position="266"/>
    </location>
</feature>
<feature type="modified residue" description="Phosphoserine" evidence="3">
    <location>
        <position position="224"/>
    </location>
</feature>
<feature type="modified residue" description="Phosphoserine" evidence="3">
    <location>
        <position position="256"/>
    </location>
</feature>
<feature type="modified residue" description="Phosphoserine" evidence="3">
    <location>
        <position position="265"/>
    </location>
</feature>
<feature type="modified residue" description="Phosphoserine" evidence="3">
    <location>
        <position position="266"/>
    </location>
</feature>
<feature type="modified residue" description="Phosphoserine" evidence="3">
    <location>
        <position position="302"/>
    </location>
</feature>
<feature type="modified residue" description="Phosphoserine" evidence="3">
    <location>
        <position position="311"/>
    </location>
</feature>
<organism>
    <name type="scientific">Rattus norvegicus</name>
    <name type="common">Rat</name>
    <dbReference type="NCBI Taxonomy" id="10116"/>
    <lineage>
        <taxon>Eukaryota</taxon>
        <taxon>Metazoa</taxon>
        <taxon>Chordata</taxon>
        <taxon>Craniata</taxon>
        <taxon>Vertebrata</taxon>
        <taxon>Euteleostomi</taxon>
        <taxon>Mammalia</taxon>
        <taxon>Eutheria</taxon>
        <taxon>Euarchontoglires</taxon>
        <taxon>Glires</taxon>
        <taxon>Rodentia</taxon>
        <taxon>Myomorpha</taxon>
        <taxon>Muroidea</taxon>
        <taxon>Muridae</taxon>
        <taxon>Murinae</taxon>
        <taxon>Rattus</taxon>
    </lineage>
</organism>
<accession>Q4V7B4</accession>
<gene>
    <name type="primary">Proca1</name>
</gene>
<name>PRCA1_RAT</name>
<evidence type="ECO:0000256" key="1">
    <source>
        <dbReference type="SAM" id="MobiDB-lite"/>
    </source>
</evidence>
<evidence type="ECO:0000305" key="2"/>
<evidence type="ECO:0007744" key="3">
    <source>
    </source>
</evidence>
<proteinExistence type="evidence at protein level"/>
<protein>
    <recommendedName>
        <fullName>Protein PROCA1</fullName>
    </recommendedName>
</protein>
<dbReference type="EMBL" id="BC098036">
    <property type="protein sequence ID" value="AAH98036.1"/>
    <property type="molecule type" value="mRNA"/>
</dbReference>
<dbReference type="RefSeq" id="NP_001020929.1">
    <property type="nucleotide sequence ID" value="NM_001025758.1"/>
</dbReference>
<dbReference type="FunCoup" id="Q4V7B4">
    <property type="interactions" value="50"/>
</dbReference>
<dbReference type="STRING" id="10116.ENSRNOP00000031483"/>
<dbReference type="iPTMnet" id="Q4V7B4"/>
<dbReference type="PhosphoSitePlus" id="Q4V7B4"/>
<dbReference type="PaxDb" id="10116-ENSRNOP00000031483"/>
<dbReference type="Ensembl" id="ENSRNOT00000037048.5">
    <property type="protein sequence ID" value="ENSRNOP00000031483.4"/>
    <property type="gene ID" value="ENSRNOG00000023381.5"/>
</dbReference>
<dbReference type="GeneID" id="497959"/>
<dbReference type="KEGG" id="rno:497959"/>
<dbReference type="AGR" id="RGD:1561727"/>
<dbReference type="CTD" id="147011"/>
<dbReference type="RGD" id="1561727">
    <property type="gene designation" value="Proca1"/>
</dbReference>
<dbReference type="eggNOG" id="ENOG502QTYI">
    <property type="taxonomic scope" value="Eukaryota"/>
</dbReference>
<dbReference type="GeneTree" id="ENSGT00940000162235"/>
<dbReference type="HOGENOM" id="CLU_803998_0_0_1"/>
<dbReference type="InParanoid" id="Q4V7B4"/>
<dbReference type="OMA" id="IHPFSDC"/>
<dbReference type="OrthoDB" id="6075074at2759"/>
<dbReference type="PhylomeDB" id="Q4V7B4"/>
<dbReference type="TreeFam" id="TF350402"/>
<dbReference type="PRO" id="PR:Q4V7B4"/>
<dbReference type="Proteomes" id="UP000002494">
    <property type="component" value="Chromosome 10"/>
</dbReference>
<dbReference type="Bgee" id="ENSRNOG00000023381">
    <property type="expression patterns" value="Expressed in testis and 19 other cell types or tissues"/>
</dbReference>
<dbReference type="GO" id="GO:0005739">
    <property type="term" value="C:mitochondrion"/>
    <property type="evidence" value="ECO:0000250"/>
    <property type="project" value="UniProtKB"/>
</dbReference>
<dbReference type="GO" id="GO:0030332">
    <property type="term" value="F:cyclin binding"/>
    <property type="evidence" value="ECO:0000266"/>
    <property type="project" value="RGD"/>
</dbReference>
<dbReference type="GO" id="GO:0004623">
    <property type="term" value="F:phospholipase A2 activity"/>
    <property type="evidence" value="ECO:0007669"/>
    <property type="project" value="InterPro"/>
</dbReference>
<dbReference type="GO" id="GO:0050482">
    <property type="term" value="P:arachidonate secretion"/>
    <property type="evidence" value="ECO:0007669"/>
    <property type="project" value="InterPro"/>
</dbReference>
<dbReference type="GO" id="GO:0035694">
    <property type="term" value="P:mitochondrial protein catabolic process"/>
    <property type="evidence" value="ECO:0000250"/>
    <property type="project" value="UniProtKB"/>
</dbReference>
<dbReference type="GO" id="GO:0141164">
    <property type="term" value="P:mitochondrial protein quality control"/>
    <property type="evidence" value="ECO:0000250"/>
    <property type="project" value="UniProtKB"/>
</dbReference>
<dbReference type="GO" id="GO:0007005">
    <property type="term" value="P:mitochondrion organization"/>
    <property type="evidence" value="ECO:0000250"/>
    <property type="project" value="UniProtKB"/>
</dbReference>
<dbReference type="GO" id="GO:0006644">
    <property type="term" value="P:phospholipid metabolic process"/>
    <property type="evidence" value="ECO:0007669"/>
    <property type="project" value="InterPro"/>
</dbReference>
<dbReference type="CDD" id="cd04705">
    <property type="entry name" value="PLA2_group_III_like"/>
    <property type="match status" value="1"/>
</dbReference>
<dbReference type="Gene3D" id="1.20.90.10">
    <property type="entry name" value="Phospholipase A2 domain"/>
    <property type="match status" value="1"/>
</dbReference>
<dbReference type="InterPro" id="IPR016090">
    <property type="entry name" value="PLipase_A2_dom"/>
</dbReference>
<dbReference type="InterPro" id="IPR036444">
    <property type="entry name" value="PLipase_A2_dom_sf"/>
</dbReference>
<dbReference type="PANTHER" id="PTHR12253">
    <property type="entry name" value="RH14732P"/>
    <property type="match status" value="1"/>
</dbReference>
<dbReference type="Pfam" id="PF05826">
    <property type="entry name" value="Phospholip_A2_2"/>
    <property type="match status" value="1"/>
</dbReference>